<proteinExistence type="inferred from homology"/>
<reference key="1">
    <citation type="submission" date="2008-04" db="EMBL/GenBank/DDBJ databases">
        <title>Complete sequence of Clostridium botulinum strain Eklund.</title>
        <authorList>
            <person name="Brinkac L.M."/>
            <person name="Brown J.L."/>
            <person name="Bruce D."/>
            <person name="Detter C."/>
            <person name="Munk C."/>
            <person name="Smith L.A."/>
            <person name="Smith T.J."/>
            <person name="Sutton G."/>
            <person name="Brettin T.S."/>
        </authorList>
    </citation>
    <scope>NUCLEOTIDE SEQUENCE [LARGE SCALE GENOMIC DNA]</scope>
    <source>
        <strain>Eklund 17B / Type B</strain>
    </source>
</reference>
<keyword id="KW-0131">Cell cycle</keyword>
<keyword id="KW-0132">Cell division</keyword>
<keyword id="KW-0717">Septation</keyword>
<comment type="function">
    <text evidence="1">Cell division inhibitor that blocks the formation of polar Z ring septums. Rapidly oscillates between the poles of the cell to destabilize FtsZ filaments that have formed before they mature into polar Z rings. Prevents FtsZ polymerization.</text>
</comment>
<comment type="subunit">
    <text evidence="1">Interacts with MinD and FtsZ.</text>
</comment>
<comment type="similarity">
    <text evidence="1">Belongs to the MinC family.</text>
</comment>
<name>MINC_CLOBB</name>
<evidence type="ECO:0000255" key="1">
    <source>
        <dbReference type="HAMAP-Rule" id="MF_00267"/>
    </source>
</evidence>
<sequence length="213" mass="23586">MHKDGVLIKGNREGINATIDMEKFASFEDMLNMLIKKLSKGKHFYKGTTLILNVNLSLIKKNDIKKLKESLLNEIELNEIIFEQLEQESNIQTKIFNGVYEGKTKFIRRTVRSGQCLNYPGNIVIIGDVNSGAEVHAAGNIIVLGSLKGSVNAGNTGNKKSIIAAFLLEPEILKIADVITISPDGLDKPRYPEIAKVKDGTIIVEPYLANKYI</sequence>
<feature type="chain" id="PRO_1000114276" description="Probable septum site-determining protein MinC">
    <location>
        <begin position="1"/>
        <end position="213"/>
    </location>
</feature>
<gene>
    <name evidence="1" type="primary">minC</name>
    <name type="ordered locus">CLL_A0567</name>
</gene>
<dbReference type="EMBL" id="CP001056">
    <property type="protein sequence ID" value="ACD24066.1"/>
    <property type="molecule type" value="Genomic_DNA"/>
</dbReference>
<dbReference type="SMR" id="B2TK60"/>
<dbReference type="KEGG" id="cbk:CLL_A0567"/>
<dbReference type="HOGENOM" id="CLU_048711_2_0_9"/>
<dbReference type="Proteomes" id="UP000001195">
    <property type="component" value="Chromosome"/>
</dbReference>
<dbReference type="GO" id="GO:0000902">
    <property type="term" value="P:cell morphogenesis"/>
    <property type="evidence" value="ECO:0007669"/>
    <property type="project" value="InterPro"/>
</dbReference>
<dbReference type="GO" id="GO:0000917">
    <property type="term" value="P:division septum assembly"/>
    <property type="evidence" value="ECO:0007669"/>
    <property type="project" value="UniProtKB-KW"/>
</dbReference>
<dbReference type="GO" id="GO:1901891">
    <property type="term" value="P:regulation of cell septum assembly"/>
    <property type="evidence" value="ECO:0007669"/>
    <property type="project" value="InterPro"/>
</dbReference>
<dbReference type="Gene3D" id="2.160.20.70">
    <property type="match status" value="1"/>
</dbReference>
<dbReference type="HAMAP" id="MF_00267">
    <property type="entry name" value="MinC"/>
    <property type="match status" value="1"/>
</dbReference>
<dbReference type="InterPro" id="IPR016098">
    <property type="entry name" value="CAP/MinC_C"/>
</dbReference>
<dbReference type="InterPro" id="IPR013033">
    <property type="entry name" value="MinC"/>
</dbReference>
<dbReference type="InterPro" id="IPR036145">
    <property type="entry name" value="MinC_C_sf"/>
</dbReference>
<dbReference type="InterPro" id="IPR055219">
    <property type="entry name" value="MinC_N_1"/>
</dbReference>
<dbReference type="InterPro" id="IPR005526">
    <property type="entry name" value="Septum_form_inhib_MinC_C"/>
</dbReference>
<dbReference type="NCBIfam" id="NF001775">
    <property type="entry name" value="PRK00513.1-6"/>
    <property type="match status" value="1"/>
</dbReference>
<dbReference type="PANTHER" id="PTHR34108">
    <property type="entry name" value="SEPTUM SITE-DETERMINING PROTEIN MINC"/>
    <property type="match status" value="1"/>
</dbReference>
<dbReference type="PANTHER" id="PTHR34108:SF1">
    <property type="entry name" value="SEPTUM SITE-DETERMINING PROTEIN MINC"/>
    <property type="match status" value="1"/>
</dbReference>
<dbReference type="Pfam" id="PF03775">
    <property type="entry name" value="MinC_C"/>
    <property type="match status" value="1"/>
</dbReference>
<dbReference type="Pfam" id="PF22642">
    <property type="entry name" value="MinC_N_1"/>
    <property type="match status" value="1"/>
</dbReference>
<dbReference type="SUPFAM" id="SSF63848">
    <property type="entry name" value="Cell-division inhibitor MinC, C-terminal domain"/>
    <property type="match status" value="1"/>
</dbReference>
<protein>
    <recommendedName>
        <fullName evidence="1">Probable septum site-determining protein MinC</fullName>
    </recommendedName>
</protein>
<organism>
    <name type="scientific">Clostridium botulinum (strain Eklund 17B / Type B)</name>
    <dbReference type="NCBI Taxonomy" id="935198"/>
    <lineage>
        <taxon>Bacteria</taxon>
        <taxon>Bacillati</taxon>
        <taxon>Bacillota</taxon>
        <taxon>Clostridia</taxon>
        <taxon>Eubacteriales</taxon>
        <taxon>Clostridiaceae</taxon>
        <taxon>Clostridium</taxon>
    </lineage>
</organism>
<accession>B2TK60</accession>